<protein>
    <recommendedName>
        <fullName evidence="1">Glucose-6-phosphate isomerase</fullName>
        <shortName evidence="1">GPI</shortName>
        <ecNumber evidence="1">5.3.1.9</ecNumber>
    </recommendedName>
    <alternativeName>
        <fullName evidence="1">Phosphoglucose isomerase</fullName>
        <shortName evidence="1">PGI</shortName>
    </alternativeName>
    <alternativeName>
        <fullName evidence="1">Phosphohexose isomerase</fullName>
        <shortName evidence="1">PHI</shortName>
    </alternativeName>
</protein>
<proteinExistence type="inferred from homology"/>
<sequence>MKNINPTQTSAWQALQKHYDEMKDVTIAELFANDSDRFAKFSATFDDLMLVDFSKNRITEETLAKLQDLAKETDLAGAIKSMFSGEKINRTEDRAVLHVALRNRSNTPIIVDGKDVMPEVNAVLEKMKTFSQAIISGQWKGYTGKAITDVVNIGIGGSDLGPFMVTEVLRPYKNHLTMHFVSNVDGTHIAEVLKKVNPETTLFLVASKTFTTQETMTNAHSARDWFLKTAGDEKHVAKHFAALSTNAKAVGEFGIDTANMFEFWDWVGGRYSLWSAIGLSIILSVGFDNFVELLSGAHAMDKHFSTTPAEKNLPILLALIGIWYNNFFGAETEAILPYDQYMHRFAAYFQQGNMESNGKYVDRNGNAVDYQTGPIIWGEPGTNGQHAFYQLIHQGTKMVPCDFIAPAITHNPLSDHHQKLLSNFFAQTEALAFGKSREVVEQEYRDQGKDPAQLEHVVPFKVFEGNRPTNSILLREITPFSLGALIALYEHKIFTQGVILNIFTFDQWGVELGKQLANRILPELGDDKAISSHDSSTNGLINRYKAWRA</sequence>
<keyword id="KW-0963">Cytoplasm</keyword>
<keyword id="KW-0312">Gluconeogenesis</keyword>
<keyword id="KW-0324">Glycolysis</keyword>
<keyword id="KW-0413">Isomerase</keyword>
<evidence type="ECO:0000255" key="1">
    <source>
        <dbReference type="HAMAP-Rule" id="MF_00473"/>
    </source>
</evidence>
<accession>B5BJU4</accession>
<feature type="chain" id="PRO_1000125756" description="Glucose-6-phosphate isomerase">
    <location>
        <begin position="1"/>
        <end position="549"/>
    </location>
</feature>
<feature type="active site" description="Proton donor" evidence="1">
    <location>
        <position position="355"/>
    </location>
</feature>
<feature type="active site" evidence="1">
    <location>
        <position position="386"/>
    </location>
</feature>
<feature type="active site" evidence="1">
    <location>
        <position position="514"/>
    </location>
</feature>
<comment type="function">
    <text evidence="1">Catalyzes the reversible isomerization of glucose-6-phosphate to fructose-6-phosphate.</text>
</comment>
<comment type="catalytic activity">
    <reaction evidence="1">
        <text>alpha-D-glucose 6-phosphate = beta-D-fructose 6-phosphate</text>
        <dbReference type="Rhea" id="RHEA:11816"/>
        <dbReference type="ChEBI" id="CHEBI:57634"/>
        <dbReference type="ChEBI" id="CHEBI:58225"/>
        <dbReference type="EC" id="5.3.1.9"/>
    </reaction>
</comment>
<comment type="pathway">
    <text evidence="1">Carbohydrate biosynthesis; gluconeogenesis.</text>
</comment>
<comment type="pathway">
    <text evidence="1">Carbohydrate degradation; glycolysis; D-glyceraldehyde 3-phosphate and glycerone phosphate from D-glucose: step 2/4.</text>
</comment>
<comment type="subcellular location">
    <subcellularLocation>
        <location evidence="1">Cytoplasm</location>
    </subcellularLocation>
</comment>
<comment type="similarity">
    <text evidence="1">Belongs to the GPI family.</text>
</comment>
<dbReference type="EC" id="5.3.1.9" evidence="1"/>
<dbReference type="EMBL" id="FM200053">
    <property type="protein sequence ID" value="CAR62031.1"/>
    <property type="molecule type" value="Genomic_DNA"/>
</dbReference>
<dbReference type="RefSeq" id="WP_000790041.1">
    <property type="nucleotide sequence ID" value="NC_011147.1"/>
</dbReference>
<dbReference type="SMR" id="B5BJU4"/>
<dbReference type="KEGG" id="sek:SSPA3747"/>
<dbReference type="HOGENOM" id="CLU_017947_3_1_6"/>
<dbReference type="UniPathway" id="UPA00109">
    <property type="reaction ID" value="UER00181"/>
</dbReference>
<dbReference type="UniPathway" id="UPA00138"/>
<dbReference type="Proteomes" id="UP000001869">
    <property type="component" value="Chromosome"/>
</dbReference>
<dbReference type="GO" id="GO:0005829">
    <property type="term" value="C:cytosol"/>
    <property type="evidence" value="ECO:0007669"/>
    <property type="project" value="TreeGrafter"/>
</dbReference>
<dbReference type="GO" id="GO:0097367">
    <property type="term" value="F:carbohydrate derivative binding"/>
    <property type="evidence" value="ECO:0007669"/>
    <property type="project" value="InterPro"/>
</dbReference>
<dbReference type="GO" id="GO:0004347">
    <property type="term" value="F:glucose-6-phosphate isomerase activity"/>
    <property type="evidence" value="ECO:0007669"/>
    <property type="project" value="UniProtKB-UniRule"/>
</dbReference>
<dbReference type="GO" id="GO:0048029">
    <property type="term" value="F:monosaccharide binding"/>
    <property type="evidence" value="ECO:0007669"/>
    <property type="project" value="TreeGrafter"/>
</dbReference>
<dbReference type="GO" id="GO:0006094">
    <property type="term" value="P:gluconeogenesis"/>
    <property type="evidence" value="ECO:0007669"/>
    <property type="project" value="UniProtKB-UniRule"/>
</dbReference>
<dbReference type="GO" id="GO:0051156">
    <property type="term" value="P:glucose 6-phosphate metabolic process"/>
    <property type="evidence" value="ECO:0007669"/>
    <property type="project" value="TreeGrafter"/>
</dbReference>
<dbReference type="GO" id="GO:0006096">
    <property type="term" value="P:glycolytic process"/>
    <property type="evidence" value="ECO:0007669"/>
    <property type="project" value="UniProtKB-UniRule"/>
</dbReference>
<dbReference type="CDD" id="cd05015">
    <property type="entry name" value="SIS_PGI_1"/>
    <property type="match status" value="1"/>
</dbReference>
<dbReference type="CDD" id="cd05016">
    <property type="entry name" value="SIS_PGI_2"/>
    <property type="match status" value="1"/>
</dbReference>
<dbReference type="FunFam" id="1.10.1390.10:FF:000001">
    <property type="entry name" value="Glucose-6-phosphate isomerase"/>
    <property type="match status" value="1"/>
</dbReference>
<dbReference type="FunFam" id="3.40.50.10490:FF:000004">
    <property type="entry name" value="Glucose-6-phosphate isomerase"/>
    <property type="match status" value="1"/>
</dbReference>
<dbReference type="Gene3D" id="1.10.1390.10">
    <property type="match status" value="1"/>
</dbReference>
<dbReference type="Gene3D" id="3.40.50.10490">
    <property type="entry name" value="Glucose-6-phosphate isomerase like protein, domain 1"/>
    <property type="match status" value="2"/>
</dbReference>
<dbReference type="HAMAP" id="MF_00473">
    <property type="entry name" value="G6P_isomerase"/>
    <property type="match status" value="1"/>
</dbReference>
<dbReference type="InterPro" id="IPR001672">
    <property type="entry name" value="G6P_Isomerase"/>
</dbReference>
<dbReference type="InterPro" id="IPR023096">
    <property type="entry name" value="G6P_Isomerase_C"/>
</dbReference>
<dbReference type="InterPro" id="IPR018189">
    <property type="entry name" value="Phosphoglucose_isomerase_CS"/>
</dbReference>
<dbReference type="InterPro" id="IPR046348">
    <property type="entry name" value="SIS_dom_sf"/>
</dbReference>
<dbReference type="InterPro" id="IPR035476">
    <property type="entry name" value="SIS_PGI_1"/>
</dbReference>
<dbReference type="InterPro" id="IPR035482">
    <property type="entry name" value="SIS_PGI_2"/>
</dbReference>
<dbReference type="NCBIfam" id="NF001211">
    <property type="entry name" value="PRK00179.1"/>
    <property type="match status" value="1"/>
</dbReference>
<dbReference type="PANTHER" id="PTHR11469">
    <property type="entry name" value="GLUCOSE-6-PHOSPHATE ISOMERASE"/>
    <property type="match status" value="1"/>
</dbReference>
<dbReference type="PANTHER" id="PTHR11469:SF1">
    <property type="entry name" value="GLUCOSE-6-PHOSPHATE ISOMERASE"/>
    <property type="match status" value="1"/>
</dbReference>
<dbReference type="Pfam" id="PF00342">
    <property type="entry name" value="PGI"/>
    <property type="match status" value="1"/>
</dbReference>
<dbReference type="PRINTS" id="PR00662">
    <property type="entry name" value="G6PISOMERASE"/>
</dbReference>
<dbReference type="SUPFAM" id="SSF53697">
    <property type="entry name" value="SIS domain"/>
    <property type="match status" value="1"/>
</dbReference>
<dbReference type="PROSITE" id="PS00765">
    <property type="entry name" value="P_GLUCOSE_ISOMERASE_1"/>
    <property type="match status" value="1"/>
</dbReference>
<dbReference type="PROSITE" id="PS00174">
    <property type="entry name" value="P_GLUCOSE_ISOMERASE_2"/>
    <property type="match status" value="1"/>
</dbReference>
<dbReference type="PROSITE" id="PS51463">
    <property type="entry name" value="P_GLUCOSE_ISOMERASE_3"/>
    <property type="match status" value="1"/>
</dbReference>
<name>G6PI_SALPK</name>
<reference key="1">
    <citation type="journal article" date="2009" name="BMC Genomics">
        <title>Pseudogene accumulation in the evolutionary histories of Salmonella enterica serovars Paratyphi A and Typhi.</title>
        <authorList>
            <person name="Holt K.E."/>
            <person name="Thomson N.R."/>
            <person name="Wain J."/>
            <person name="Langridge G.C."/>
            <person name="Hasan R."/>
            <person name="Bhutta Z.A."/>
            <person name="Quail M.A."/>
            <person name="Norbertczak H."/>
            <person name="Walker D."/>
            <person name="Simmonds M."/>
            <person name="White B."/>
            <person name="Bason N."/>
            <person name="Mungall K."/>
            <person name="Dougan G."/>
            <person name="Parkhill J."/>
        </authorList>
    </citation>
    <scope>NUCLEOTIDE SEQUENCE [LARGE SCALE GENOMIC DNA]</scope>
    <source>
        <strain>AKU_12601</strain>
    </source>
</reference>
<gene>
    <name evidence="1" type="primary">pgi</name>
    <name type="ordered locus">SSPA3747</name>
</gene>
<organism>
    <name type="scientific">Salmonella paratyphi A (strain AKU_12601)</name>
    <dbReference type="NCBI Taxonomy" id="554290"/>
    <lineage>
        <taxon>Bacteria</taxon>
        <taxon>Pseudomonadati</taxon>
        <taxon>Pseudomonadota</taxon>
        <taxon>Gammaproteobacteria</taxon>
        <taxon>Enterobacterales</taxon>
        <taxon>Enterobacteriaceae</taxon>
        <taxon>Salmonella</taxon>
    </lineage>
</organism>